<reference key="1">
    <citation type="journal article" date="2003" name="Science">
        <title>Role of mobile DNA in the evolution of vancomycin-resistant Enterococcus faecalis.</title>
        <authorList>
            <person name="Paulsen I.T."/>
            <person name="Banerjei L."/>
            <person name="Myers G.S.A."/>
            <person name="Nelson K.E."/>
            <person name="Seshadri R."/>
            <person name="Read T.D."/>
            <person name="Fouts D.E."/>
            <person name="Eisen J.A."/>
            <person name="Gill S.R."/>
            <person name="Heidelberg J.F."/>
            <person name="Tettelin H."/>
            <person name="Dodson R.J."/>
            <person name="Umayam L.A."/>
            <person name="Brinkac L.M."/>
            <person name="Beanan M.J."/>
            <person name="Daugherty S.C."/>
            <person name="DeBoy R.T."/>
            <person name="Durkin S.A."/>
            <person name="Kolonay J.F."/>
            <person name="Madupu R."/>
            <person name="Nelson W.C."/>
            <person name="Vamathevan J.J."/>
            <person name="Tran B."/>
            <person name="Upton J."/>
            <person name="Hansen T."/>
            <person name="Shetty J."/>
            <person name="Khouri H.M."/>
            <person name="Utterback T.R."/>
            <person name="Radune D."/>
            <person name="Ketchum K.A."/>
            <person name="Dougherty B.A."/>
            <person name="Fraser C.M."/>
        </authorList>
    </citation>
    <scope>NUCLEOTIDE SEQUENCE [LARGE SCALE GENOMIC DNA]</scope>
    <source>
        <strain>ATCC 700802 / V583</strain>
    </source>
</reference>
<organism>
    <name type="scientific">Enterococcus faecalis (strain ATCC 700802 / V583)</name>
    <dbReference type="NCBI Taxonomy" id="226185"/>
    <lineage>
        <taxon>Bacteria</taxon>
        <taxon>Bacillati</taxon>
        <taxon>Bacillota</taxon>
        <taxon>Bacilli</taxon>
        <taxon>Lactobacillales</taxon>
        <taxon>Enterococcaceae</taxon>
        <taxon>Enterococcus</taxon>
    </lineage>
</organism>
<evidence type="ECO:0000255" key="1">
    <source>
        <dbReference type="HAMAP-Rule" id="MF_00145"/>
    </source>
</evidence>
<comment type="catalytic activity">
    <reaction evidence="1">
        <text>(2R)-3-phosphoglycerate + ATP = (2R)-3-phospho-glyceroyl phosphate + ADP</text>
        <dbReference type="Rhea" id="RHEA:14801"/>
        <dbReference type="ChEBI" id="CHEBI:30616"/>
        <dbReference type="ChEBI" id="CHEBI:57604"/>
        <dbReference type="ChEBI" id="CHEBI:58272"/>
        <dbReference type="ChEBI" id="CHEBI:456216"/>
        <dbReference type="EC" id="2.7.2.3"/>
    </reaction>
</comment>
<comment type="pathway">
    <text evidence="1">Carbohydrate degradation; glycolysis; pyruvate from D-glyceraldehyde 3-phosphate: step 2/5.</text>
</comment>
<comment type="subunit">
    <text evidence="1">Monomer.</text>
</comment>
<comment type="subcellular location">
    <subcellularLocation>
        <location evidence="1">Cytoplasm</location>
    </subcellularLocation>
</comment>
<comment type="similarity">
    <text evidence="1">Belongs to the phosphoglycerate kinase family.</text>
</comment>
<protein>
    <recommendedName>
        <fullName evidence="1">Phosphoglycerate kinase</fullName>
        <ecNumber evidence="1">2.7.2.3</ecNumber>
    </recommendedName>
</protein>
<dbReference type="EC" id="2.7.2.3" evidence="1"/>
<dbReference type="EMBL" id="AE016830">
    <property type="protein sequence ID" value="AAO81709.1"/>
    <property type="molecule type" value="Genomic_DNA"/>
</dbReference>
<dbReference type="RefSeq" id="NP_815639.1">
    <property type="nucleotide sequence ID" value="NC_004668.1"/>
</dbReference>
<dbReference type="RefSeq" id="WP_002357094.1">
    <property type="nucleotide sequence ID" value="NZ_KE136528.1"/>
</dbReference>
<dbReference type="SMR" id="Q833I9"/>
<dbReference type="STRING" id="226185.EF_1963"/>
<dbReference type="EnsemblBacteria" id="AAO81709">
    <property type="protein sequence ID" value="AAO81709"/>
    <property type="gene ID" value="EF_1963"/>
</dbReference>
<dbReference type="KEGG" id="efa:EF1963"/>
<dbReference type="PATRIC" id="fig|226185.45.peg.1562"/>
<dbReference type="eggNOG" id="COG0126">
    <property type="taxonomic scope" value="Bacteria"/>
</dbReference>
<dbReference type="HOGENOM" id="CLU_025427_0_2_9"/>
<dbReference type="UniPathway" id="UPA00109">
    <property type="reaction ID" value="UER00185"/>
</dbReference>
<dbReference type="Proteomes" id="UP000001415">
    <property type="component" value="Chromosome"/>
</dbReference>
<dbReference type="GO" id="GO:0005829">
    <property type="term" value="C:cytosol"/>
    <property type="evidence" value="ECO:0007669"/>
    <property type="project" value="TreeGrafter"/>
</dbReference>
<dbReference type="GO" id="GO:0043531">
    <property type="term" value="F:ADP binding"/>
    <property type="evidence" value="ECO:0007669"/>
    <property type="project" value="TreeGrafter"/>
</dbReference>
<dbReference type="GO" id="GO:0005524">
    <property type="term" value="F:ATP binding"/>
    <property type="evidence" value="ECO:0007669"/>
    <property type="project" value="UniProtKB-KW"/>
</dbReference>
<dbReference type="GO" id="GO:0004618">
    <property type="term" value="F:phosphoglycerate kinase activity"/>
    <property type="evidence" value="ECO:0007669"/>
    <property type="project" value="UniProtKB-UniRule"/>
</dbReference>
<dbReference type="GO" id="GO:0006094">
    <property type="term" value="P:gluconeogenesis"/>
    <property type="evidence" value="ECO:0007669"/>
    <property type="project" value="TreeGrafter"/>
</dbReference>
<dbReference type="GO" id="GO:0006096">
    <property type="term" value="P:glycolytic process"/>
    <property type="evidence" value="ECO:0007669"/>
    <property type="project" value="UniProtKB-UniRule"/>
</dbReference>
<dbReference type="CDD" id="cd00318">
    <property type="entry name" value="Phosphoglycerate_kinase"/>
    <property type="match status" value="1"/>
</dbReference>
<dbReference type="FunFam" id="3.40.50.1260:FF:000001">
    <property type="entry name" value="Phosphoglycerate kinase"/>
    <property type="match status" value="1"/>
</dbReference>
<dbReference type="FunFam" id="3.40.50.1260:FF:000008">
    <property type="entry name" value="Phosphoglycerate kinase"/>
    <property type="match status" value="1"/>
</dbReference>
<dbReference type="Gene3D" id="3.40.50.1260">
    <property type="entry name" value="Phosphoglycerate kinase, N-terminal domain"/>
    <property type="match status" value="2"/>
</dbReference>
<dbReference type="HAMAP" id="MF_00145">
    <property type="entry name" value="Phosphoglyc_kinase"/>
    <property type="match status" value="1"/>
</dbReference>
<dbReference type="InterPro" id="IPR001576">
    <property type="entry name" value="Phosphoglycerate_kinase"/>
</dbReference>
<dbReference type="InterPro" id="IPR015911">
    <property type="entry name" value="Phosphoglycerate_kinase_CS"/>
</dbReference>
<dbReference type="InterPro" id="IPR015824">
    <property type="entry name" value="Phosphoglycerate_kinase_N"/>
</dbReference>
<dbReference type="InterPro" id="IPR036043">
    <property type="entry name" value="Phosphoglycerate_kinase_sf"/>
</dbReference>
<dbReference type="PANTHER" id="PTHR11406">
    <property type="entry name" value="PHOSPHOGLYCERATE KINASE"/>
    <property type="match status" value="1"/>
</dbReference>
<dbReference type="PANTHER" id="PTHR11406:SF23">
    <property type="entry name" value="PHOSPHOGLYCERATE KINASE 1, CHLOROPLASTIC-RELATED"/>
    <property type="match status" value="1"/>
</dbReference>
<dbReference type="Pfam" id="PF00162">
    <property type="entry name" value="PGK"/>
    <property type="match status" value="1"/>
</dbReference>
<dbReference type="PIRSF" id="PIRSF000724">
    <property type="entry name" value="Pgk"/>
    <property type="match status" value="1"/>
</dbReference>
<dbReference type="PRINTS" id="PR00477">
    <property type="entry name" value="PHGLYCKINASE"/>
</dbReference>
<dbReference type="SUPFAM" id="SSF53748">
    <property type="entry name" value="Phosphoglycerate kinase"/>
    <property type="match status" value="1"/>
</dbReference>
<dbReference type="PROSITE" id="PS00111">
    <property type="entry name" value="PGLYCERATE_KINASE"/>
    <property type="match status" value="1"/>
</dbReference>
<gene>
    <name evidence="1" type="primary">pgk</name>
    <name type="ordered locus">EF_1963</name>
</gene>
<sequence>MAKKTIKDVDLKDKKVLVRVDFNVPLKDGVITNDNRIVAALPTIKYVIENGGKAILFSHLGRVKTEEDKAGKSLKPVAERLSELLGQPVTFVPETRGKELEDAVNNMKDGDVLVFENTRFEDVDGKKESGNDAELGKYWASLGDVFVNDAFGTAHRAHASNVGIASTGIPTVAGFLMEKEIKFIGEAVENPKRPFVAILGGAKVSDKIAVIENLIEKADKILIGGGMAYTFMKAQGYSVGLSLLEEDKVDLAKSLMEKAGDKLVLPVDTVVSKEFSNDAPFHTVPSTEIPDDEEGLDIGEKTIELFANELQGAKTVVWNGPMGVFEMSNFAKGTIGVCEAIANLEDATTIIGGGDSAAAAIQLGYENKFSHISTGGGASLELLEGKTLPGLASINDK</sequence>
<proteinExistence type="inferred from homology"/>
<name>PGK_ENTFA</name>
<feature type="chain" id="PRO_0000145944" description="Phosphoglycerate kinase">
    <location>
        <begin position="1"/>
        <end position="397"/>
    </location>
</feature>
<feature type="binding site" evidence="1">
    <location>
        <begin position="21"/>
        <end position="23"/>
    </location>
    <ligand>
        <name>substrate</name>
    </ligand>
</feature>
<feature type="binding site" evidence="1">
    <location>
        <position position="36"/>
    </location>
    <ligand>
        <name>substrate</name>
    </ligand>
</feature>
<feature type="binding site" evidence="1">
    <location>
        <begin position="59"/>
        <end position="62"/>
    </location>
    <ligand>
        <name>substrate</name>
    </ligand>
</feature>
<feature type="binding site" evidence="1">
    <location>
        <position position="119"/>
    </location>
    <ligand>
        <name>substrate</name>
    </ligand>
</feature>
<feature type="binding site" evidence="1">
    <location>
        <position position="156"/>
    </location>
    <ligand>
        <name>substrate</name>
    </ligand>
</feature>
<feature type="binding site" evidence="1">
    <location>
        <position position="207"/>
    </location>
    <ligand>
        <name>ATP</name>
        <dbReference type="ChEBI" id="CHEBI:30616"/>
    </ligand>
</feature>
<feature type="binding site" evidence="1">
    <location>
        <position position="295"/>
    </location>
    <ligand>
        <name>ATP</name>
        <dbReference type="ChEBI" id="CHEBI:30616"/>
    </ligand>
</feature>
<feature type="binding site" evidence="1">
    <location>
        <position position="326"/>
    </location>
    <ligand>
        <name>ATP</name>
        <dbReference type="ChEBI" id="CHEBI:30616"/>
    </ligand>
</feature>
<feature type="binding site" evidence="1">
    <location>
        <begin position="353"/>
        <end position="356"/>
    </location>
    <ligand>
        <name>ATP</name>
        <dbReference type="ChEBI" id="CHEBI:30616"/>
    </ligand>
</feature>
<keyword id="KW-0067">ATP-binding</keyword>
<keyword id="KW-0963">Cytoplasm</keyword>
<keyword id="KW-0324">Glycolysis</keyword>
<keyword id="KW-0418">Kinase</keyword>
<keyword id="KW-0547">Nucleotide-binding</keyword>
<keyword id="KW-1185">Reference proteome</keyword>
<keyword id="KW-0808">Transferase</keyword>
<accession>Q833I9</accession>